<keyword id="KW-0414">Isoprene biosynthesis</keyword>
<keyword id="KW-0460">Magnesium</keyword>
<keyword id="KW-0479">Metal-binding</keyword>
<keyword id="KW-0784">Thiamine biosynthesis</keyword>
<keyword id="KW-0786">Thiamine pyrophosphate</keyword>
<keyword id="KW-0808">Transferase</keyword>
<reference key="1">
    <citation type="submission" date="2007-04" db="EMBL/GenBank/DDBJ databases">
        <title>Complete sequence of Pseudomonas mendocina ymp.</title>
        <authorList>
            <consortium name="US DOE Joint Genome Institute"/>
            <person name="Copeland A."/>
            <person name="Lucas S."/>
            <person name="Lapidus A."/>
            <person name="Barry K."/>
            <person name="Glavina del Rio T."/>
            <person name="Dalin E."/>
            <person name="Tice H."/>
            <person name="Pitluck S."/>
            <person name="Kiss H."/>
            <person name="Brettin T."/>
            <person name="Detter J.C."/>
            <person name="Bruce D."/>
            <person name="Han C."/>
            <person name="Schmutz J."/>
            <person name="Larimer F."/>
            <person name="Land M."/>
            <person name="Hauser L."/>
            <person name="Kyrpides N."/>
            <person name="Mikhailova N."/>
            <person name="Hersman L."/>
            <person name="Dubois J."/>
            <person name="Maurice P."/>
            <person name="Richardson P."/>
        </authorList>
    </citation>
    <scope>NUCLEOTIDE SEQUENCE [LARGE SCALE GENOMIC DNA]</scope>
    <source>
        <strain>ymp</strain>
    </source>
</reference>
<dbReference type="EC" id="2.2.1.7" evidence="1"/>
<dbReference type="EMBL" id="CP000680">
    <property type="protein sequence ID" value="ABP86591.1"/>
    <property type="molecule type" value="Genomic_DNA"/>
</dbReference>
<dbReference type="SMR" id="A4XZ25"/>
<dbReference type="STRING" id="399739.Pmen_3844"/>
<dbReference type="KEGG" id="pmy:Pmen_3844"/>
<dbReference type="PATRIC" id="fig|399739.8.peg.3897"/>
<dbReference type="eggNOG" id="COG1154">
    <property type="taxonomic scope" value="Bacteria"/>
</dbReference>
<dbReference type="HOGENOM" id="CLU_009227_1_4_6"/>
<dbReference type="OrthoDB" id="9803371at2"/>
<dbReference type="UniPathway" id="UPA00064">
    <property type="reaction ID" value="UER00091"/>
</dbReference>
<dbReference type="GO" id="GO:0005829">
    <property type="term" value="C:cytosol"/>
    <property type="evidence" value="ECO:0007669"/>
    <property type="project" value="TreeGrafter"/>
</dbReference>
<dbReference type="GO" id="GO:0008661">
    <property type="term" value="F:1-deoxy-D-xylulose-5-phosphate synthase activity"/>
    <property type="evidence" value="ECO:0007669"/>
    <property type="project" value="UniProtKB-UniRule"/>
</dbReference>
<dbReference type="GO" id="GO:0000287">
    <property type="term" value="F:magnesium ion binding"/>
    <property type="evidence" value="ECO:0007669"/>
    <property type="project" value="UniProtKB-UniRule"/>
</dbReference>
<dbReference type="GO" id="GO:0030976">
    <property type="term" value="F:thiamine pyrophosphate binding"/>
    <property type="evidence" value="ECO:0007669"/>
    <property type="project" value="UniProtKB-UniRule"/>
</dbReference>
<dbReference type="GO" id="GO:0052865">
    <property type="term" value="P:1-deoxy-D-xylulose 5-phosphate biosynthetic process"/>
    <property type="evidence" value="ECO:0007669"/>
    <property type="project" value="UniProtKB-UniPathway"/>
</dbReference>
<dbReference type="GO" id="GO:0019288">
    <property type="term" value="P:isopentenyl diphosphate biosynthetic process, methylerythritol 4-phosphate pathway"/>
    <property type="evidence" value="ECO:0007669"/>
    <property type="project" value="TreeGrafter"/>
</dbReference>
<dbReference type="GO" id="GO:0016114">
    <property type="term" value="P:terpenoid biosynthetic process"/>
    <property type="evidence" value="ECO:0007669"/>
    <property type="project" value="UniProtKB-UniRule"/>
</dbReference>
<dbReference type="GO" id="GO:0009228">
    <property type="term" value="P:thiamine biosynthetic process"/>
    <property type="evidence" value="ECO:0007669"/>
    <property type="project" value="UniProtKB-UniRule"/>
</dbReference>
<dbReference type="CDD" id="cd02007">
    <property type="entry name" value="TPP_DXS"/>
    <property type="match status" value="1"/>
</dbReference>
<dbReference type="CDD" id="cd07033">
    <property type="entry name" value="TPP_PYR_DXS_TK_like"/>
    <property type="match status" value="1"/>
</dbReference>
<dbReference type="FunFam" id="3.40.50.920:FF:000002">
    <property type="entry name" value="1-deoxy-D-xylulose-5-phosphate synthase"/>
    <property type="match status" value="1"/>
</dbReference>
<dbReference type="FunFam" id="3.40.50.970:FF:000005">
    <property type="entry name" value="1-deoxy-D-xylulose-5-phosphate synthase"/>
    <property type="match status" value="1"/>
</dbReference>
<dbReference type="Gene3D" id="3.40.50.920">
    <property type="match status" value="1"/>
</dbReference>
<dbReference type="Gene3D" id="3.40.50.970">
    <property type="match status" value="2"/>
</dbReference>
<dbReference type="HAMAP" id="MF_00315">
    <property type="entry name" value="DXP_synth"/>
    <property type="match status" value="1"/>
</dbReference>
<dbReference type="InterPro" id="IPR005477">
    <property type="entry name" value="Dxylulose-5-P_synthase"/>
</dbReference>
<dbReference type="InterPro" id="IPR029061">
    <property type="entry name" value="THDP-binding"/>
</dbReference>
<dbReference type="InterPro" id="IPR009014">
    <property type="entry name" value="Transketo_C/PFOR_II"/>
</dbReference>
<dbReference type="InterPro" id="IPR005475">
    <property type="entry name" value="Transketolase-like_Pyr-bd"/>
</dbReference>
<dbReference type="InterPro" id="IPR020826">
    <property type="entry name" value="Transketolase_BS"/>
</dbReference>
<dbReference type="InterPro" id="IPR033248">
    <property type="entry name" value="Transketolase_C"/>
</dbReference>
<dbReference type="NCBIfam" id="TIGR00204">
    <property type="entry name" value="dxs"/>
    <property type="match status" value="1"/>
</dbReference>
<dbReference type="NCBIfam" id="NF003933">
    <property type="entry name" value="PRK05444.2-2"/>
    <property type="match status" value="1"/>
</dbReference>
<dbReference type="PANTHER" id="PTHR43322">
    <property type="entry name" value="1-D-DEOXYXYLULOSE 5-PHOSPHATE SYNTHASE-RELATED"/>
    <property type="match status" value="1"/>
</dbReference>
<dbReference type="PANTHER" id="PTHR43322:SF5">
    <property type="entry name" value="1-DEOXY-D-XYLULOSE-5-PHOSPHATE SYNTHASE, CHLOROPLASTIC"/>
    <property type="match status" value="1"/>
</dbReference>
<dbReference type="Pfam" id="PF13292">
    <property type="entry name" value="DXP_synthase_N"/>
    <property type="match status" value="1"/>
</dbReference>
<dbReference type="Pfam" id="PF02779">
    <property type="entry name" value="Transket_pyr"/>
    <property type="match status" value="1"/>
</dbReference>
<dbReference type="Pfam" id="PF02780">
    <property type="entry name" value="Transketolase_C"/>
    <property type="match status" value="1"/>
</dbReference>
<dbReference type="SMART" id="SM00861">
    <property type="entry name" value="Transket_pyr"/>
    <property type="match status" value="1"/>
</dbReference>
<dbReference type="SUPFAM" id="SSF52518">
    <property type="entry name" value="Thiamin diphosphate-binding fold (THDP-binding)"/>
    <property type="match status" value="2"/>
</dbReference>
<dbReference type="SUPFAM" id="SSF52922">
    <property type="entry name" value="TK C-terminal domain-like"/>
    <property type="match status" value="1"/>
</dbReference>
<dbReference type="PROSITE" id="PS00802">
    <property type="entry name" value="TRANSKETOLASE_2"/>
    <property type="match status" value="1"/>
</dbReference>
<comment type="function">
    <text evidence="1">Catalyzes the acyloin condensation reaction between C atoms 2 and 3 of pyruvate and glyceraldehyde 3-phosphate to yield 1-deoxy-D-xylulose-5-phosphate (DXP).</text>
</comment>
<comment type="catalytic activity">
    <reaction evidence="1">
        <text>D-glyceraldehyde 3-phosphate + pyruvate + H(+) = 1-deoxy-D-xylulose 5-phosphate + CO2</text>
        <dbReference type="Rhea" id="RHEA:12605"/>
        <dbReference type="ChEBI" id="CHEBI:15361"/>
        <dbReference type="ChEBI" id="CHEBI:15378"/>
        <dbReference type="ChEBI" id="CHEBI:16526"/>
        <dbReference type="ChEBI" id="CHEBI:57792"/>
        <dbReference type="ChEBI" id="CHEBI:59776"/>
        <dbReference type="EC" id="2.2.1.7"/>
    </reaction>
</comment>
<comment type="cofactor">
    <cofactor evidence="1">
        <name>Mg(2+)</name>
        <dbReference type="ChEBI" id="CHEBI:18420"/>
    </cofactor>
    <text evidence="1">Binds 1 Mg(2+) ion per subunit.</text>
</comment>
<comment type="cofactor">
    <cofactor evidence="1">
        <name>thiamine diphosphate</name>
        <dbReference type="ChEBI" id="CHEBI:58937"/>
    </cofactor>
    <text evidence="1">Binds 1 thiamine pyrophosphate per subunit.</text>
</comment>
<comment type="pathway">
    <text evidence="1">Metabolic intermediate biosynthesis; 1-deoxy-D-xylulose 5-phosphate biosynthesis; 1-deoxy-D-xylulose 5-phosphate from D-glyceraldehyde 3-phosphate and pyruvate: step 1/1.</text>
</comment>
<comment type="subunit">
    <text evidence="1">Homodimer.</text>
</comment>
<comment type="similarity">
    <text evidence="1">Belongs to the transketolase family. DXPS subfamily.</text>
</comment>
<protein>
    <recommendedName>
        <fullName evidence="1">1-deoxy-D-xylulose-5-phosphate synthase</fullName>
        <ecNumber evidence="1">2.2.1.7</ecNumber>
    </recommendedName>
    <alternativeName>
        <fullName evidence="1">1-deoxyxylulose-5-phosphate synthase</fullName>
        <shortName evidence="1">DXP synthase</shortName>
        <shortName evidence="1">DXPS</shortName>
    </alternativeName>
</protein>
<accession>A4XZ25</accession>
<evidence type="ECO:0000255" key="1">
    <source>
        <dbReference type="HAMAP-Rule" id="MF_00315"/>
    </source>
</evidence>
<evidence type="ECO:0000256" key="2">
    <source>
        <dbReference type="SAM" id="MobiDB-lite"/>
    </source>
</evidence>
<organism>
    <name type="scientific">Ectopseudomonas mendocina (strain ymp)</name>
    <name type="common">Pseudomonas mendocina</name>
    <dbReference type="NCBI Taxonomy" id="399739"/>
    <lineage>
        <taxon>Bacteria</taxon>
        <taxon>Pseudomonadati</taxon>
        <taxon>Pseudomonadota</taxon>
        <taxon>Gammaproteobacteria</taxon>
        <taxon>Pseudomonadales</taxon>
        <taxon>Pseudomonadaceae</taxon>
        <taxon>Ectopseudomonas</taxon>
    </lineage>
</organism>
<feature type="chain" id="PRO_1000019064" description="1-deoxy-D-xylulose-5-phosphate synthase">
    <location>
        <begin position="1"/>
        <end position="631"/>
    </location>
</feature>
<feature type="region of interest" description="Disordered" evidence="2">
    <location>
        <begin position="1"/>
        <end position="21"/>
    </location>
</feature>
<feature type="binding site" evidence="1">
    <location>
        <position position="87"/>
    </location>
    <ligand>
        <name>thiamine diphosphate</name>
        <dbReference type="ChEBI" id="CHEBI:58937"/>
    </ligand>
</feature>
<feature type="binding site" evidence="1">
    <location>
        <begin position="128"/>
        <end position="130"/>
    </location>
    <ligand>
        <name>thiamine diphosphate</name>
        <dbReference type="ChEBI" id="CHEBI:58937"/>
    </ligand>
</feature>
<feature type="binding site" evidence="1">
    <location>
        <position position="159"/>
    </location>
    <ligand>
        <name>Mg(2+)</name>
        <dbReference type="ChEBI" id="CHEBI:18420"/>
    </ligand>
</feature>
<feature type="binding site" evidence="1">
    <location>
        <begin position="160"/>
        <end position="161"/>
    </location>
    <ligand>
        <name>thiamine diphosphate</name>
        <dbReference type="ChEBI" id="CHEBI:58937"/>
    </ligand>
</feature>
<feature type="binding site" evidence="1">
    <location>
        <position position="188"/>
    </location>
    <ligand>
        <name>Mg(2+)</name>
        <dbReference type="ChEBI" id="CHEBI:18420"/>
    </ligand>
</feature>
<feature type="binding site" evidence="1">
    <location>
        <position position="188"/>
    </location>
    <ligand>
        <name>thiamine diphosphate</name>
        <dbReference type="ChEBI" id="CHEBI:58937"/>
    </ligand>
</feature>
<feature type="binding site" evidence="1">
    <location>
        <position position="295"/>
    </location>
    <ligand>
        <name>thiamine diphosphate</name>
        <dbReference type="ChEBI" id="CHEBI:58937"/>
    </ligand>
</feature>
<feature type="binding site" evidence="1">
    <location>
        <position position="377"/>
    </location>
    <ligand>
        <name>thiamine diphosphate</name>
        <dbReference type="ChEBI" id="CHEBI:58937"/>
    </ligand>
</feature>
<proteinExistence type="inferred from homology"/>
<name>DXS_ECTM1</name>
<sequence length="631" mass="68304">MPTTFHEIPRERPLTPLLDSANTPDELRRLAEADLETLADELRQYLLYSVGQSGGHFGAGLGVIELTIALHYVFDTPDDRLVWDVGHQAYPHKILTGRRERMGSLRQKDGLAAFPRRSESEYDTFGVGHSSTSISAALGMAIAARLKGEKRKSVAVIGDGALTAGMAFEALNHATDVGANMLVILNDNDMSISKNVGGLSNYLAKIISSRTYASMREGSKKILSRLPGAWEIARKVEEHAKGMLVPGTLFEELGWNYVGPIDGHDLPTLLATLRNMRDLDGPQFLHVVTKKGKGFAPAEADPIGYHAITKLEPVTPSAVPRKPSGPKYSNVFGQWLCDMAAADQRLVGITPAMKEGSDLVAFAERFPERYFDVAIAEQHAVTLAAGMACDGVKPVVAIYSTFLQRAYDQLIHDVAVQNLDVLFAIDRAGLVGEDGPTHAGSFDISYLRCIPGMLVMTPSDENELRRMLTTGYLFDGPAAVRYPRGSGPNAPLDAGLELLEIGKAIVRRQGKGAALLVFGVQLAEALQVGEALNATVVDMRFVKPLDEALLRELAGSHELLVTIEENAVMGGAGSAVSEFLAAQNIIKPLLHLGLPDYYVEHAKPAQMLAECGLDQAGIERAVRERLDQLRA</sequence>
<gene>
    <name evidence="1" type="primary">dxs</name>
    <name type="ordered locus">Pmen_3844</name>
</gene>